<proteinExistence type="inferred from homology"/>
<organism>
    <name type="scientific">Bifidobacterium longum subsp. infantis (strain ATCC 15697 / DSM 20088 / JCM 1222 / NCTC 11817 / S12)</name>
    <dbReference type="NCBI Taxonomy" id="391904"/>
    <lineage>
        <taxon>Bacteria</taxon>
        <taxon>Bacillati</taxon>
        <taxon>Actinomycetota</taxon>
        <taxon>Actinomycetes</taxon>
        <taxon>Bifidobacteriales</taxon>
        <taxon>Bifidobacteriaceae</taxon>
        <taxon>Bifidobacterium</taxon>
    </lineage>
</organism>
<accession>B7GU48</accession>
<accession>E8MLZ6</accession>
<feature type="chain" id="PRO_1000135581" description="Small ribosomal subunit protein uS7">
    <location>
        <begin position="1"/>
        <end position="156"/>
    </location>
</feature>
<gene>
    <name evidence="1" type="primary">rpsG</name>
    <name type="ordered locus">Blon_1924</name>
    <name type="ordered locus">BLIJ_1995</name>
</gene>
<dbReference type="EMBL" id="CP001095">
    <property type="protein sequence ID" value="ACJ52994.1"/>
    <property type="molecule type" value="Genomic_DNA"/>
</dbReference>
<dbReference type="EMBL" id="AP010889">
    <property type="protein sequence ID" value="BAJ69573.1"/>
    <property type="molecule type" value="Genomic_DNA"/>
</dbReference>
<dbReference type="RefSeq" id="WP_012578203.1">
    <property type="nucleotide sequence ID" value="NZ_JDTT01000057.1"/>
</dbReference>
<dbReference type="SMR" id="B7GU48"/>
<dbReference type="KEGG" id="bln:Blon_1924"/>
<dbReference type="KEGG" id="blon:BLIJ_1995"/>
<dbReference type="PATRIC" id="fig|391904.8.peg.2002"/>
<dbReference type="HOGENOM" id="CLU_072226_1_1_11"/>
<dbReference type="Proteomes" id="UP000001360">
    <property type="component" value="Chromosome"/>
</dbReference>
<dbReference type="GO" id="GO:0015935">
    <property type="term" value="C:small ribosomal subunit"/>
    <property type="evidence" value="ECO:0007669"/>
    <property type="project" value="InterPro"/>
</dbReference>
<dbReference type="GO" id="GO:0019843">
    <property type="term" value="F:rRNA binding"/>
    <property type="evidence" value="ECO:0007669"/>
    <property type="project" value="UniProtKB-UniRule"/>
</dbReference>
<dbReference type="GO" id="GO:0003735">
    <property type="term" value="F:structural constituent of ribosome"/>
    <property type="evidence" value="ECO:0007669"/>
    <property type="project" value="InterPro"/>
</dbReference>
<dbReference type="GO" id="GO:0000049">
    <property type="term" value="F:tRNA binding"/>
    <property type="evidence" value="ECO:0007669"/>
    <property type="project" value="UniProtKB-UniRule"/>
</dbReference>
<dbReference type="GO" id="GO:0006412">
    <property type="term" value="P:translation"/>
    <property type="evidence" value="ECO:0007669"/>
    <property type="project" value="UniProtKB-UniRule"/>
</dbReference>
<dbReference type="CDD" id="cd14869">
    <property type="entry name" value="uS7_Bacteria"/>
    <property type="match status" value="1"/>
</dbReference>
<dbReference type="FunFam" id="1.10.455.10:FF:000001">
    <property type="entry name" value="30S ribosomal protein S7"/>
    <property type="match status" value="1"/>
</dbReference>
<dbReference type="Gene3D" id="1.10.455.10">
    <property type="entry name" value="Ribosomal protein S7 domain"/>
    <property type="match status" value="1"/>
</dbReference>
<dbReference type="HAMAP" id="MF_00480_B">
    <property type="entry name" value="Ribosomal_uS7_B"/>
    <property type="match status" value="1"/>
</dbReference>
<dbReference type="InterPro" id="IPR000235">
    <property type="entry name" value="Ribosomal_uS7"/>
</dbReference>
<dbReference type="InterPro" id="IPR005717">
    <property type="entry name" value="Ribosomal_uS7_bac/org-type"/>
</dbReference>
<dbReference type="InterPro" id="IPR020606">
    <property type="entry name" value="Ribosomal_uS7_CS"/>
</dbReference>
<dbReference type="InterPro" id="IPR023798">
    <property type="entry name" value="Ribosomal_uS7_dom"/>
</dbReference>
<dbReference type="InterPro" id="IPR036823">
    <property type="entry name" value="Ribosomal_uS7_dom_sf"/>
</dbReference>
<dbReference type="NCBIfam" id="TIGR01029">
    <property type="entry name" value="rpsG_bact"/>
    <property type="match status" value="1"/>
</dbReference>
<dbReference type="PANTHER" id="PTHR11205">
    <property type="entry name" value="RIBOSOMAL PROTEIN S7"/>
    <property type="match status" value="1"/>
</dbReference>
<dbReference type="Pfam" id="PF00177">
    <property type="entry name" value="Ribosomal_S7"/>
    <property type="match status" value="1"/>
</dbReference>
<dbReference type="PIRSF" id="PIRSF002122">
    <property type="entry name" value="RPS7p_RPS7a_RPS5e_RPS7o"/>
    <property type="match status" value="1"/>
</dbReference>
<dbReference type="SUPFAM" id="SSF47973">
    <property type="entry name" value="Ribosomal protein S7"/>
    <property type="match status" value="1"/>
</dbReference>
<dbReference type="PROSITE" id="PS00052">
    <property type="entry name" value="RIBOSOMAL_S7"/>
    <property type="match status" value="1"/>
</dbReference>
<sequence>MSRKGPSKKHVVLPDPIYGSTVVAQLINKILLDGKKSIAEDIVYSALDMVKEKTEQEPVAVLKRALDNIRPSLEVRSRRVGGATYQVPVEVKPNRANTLSLRWLTDFSRARREKTMAERLANEILDASNGLGASVKRREDTHKMAEANKAFAHYRW</sequence>
<name>RS7_BIFLS</name>
<keyword id="KW-0687">Ribonucleoprotein</keyword>
<keyword id="KW-0689">Ribosomal protein</keyword>
<keyword id="KW-0694">RNA-binding</keyword>
<keyword id="KW-0699">rRNA-binding</keyword>
<keyword id="KW-0820">tRNA-binding</keyword>
<reference key="1">
    <citation type="journal article" date="2008" name="Proc. Natl. Acad. Sci. U.S.A.">
        <title>The genome sequence of Bifidobacterium longum subsp. infantis reveals adaptations for milk utilization within the infant microbiome.</title>
        <authorList>
            <person name="Sela D.A."/>
            <person name="Chapman J."/>
            <person name="Adeuya A."/>
            <person name="Kim J.H."/>
            <person name="Chen F."/>
            <person name="Whitehead T.R."/>
            <person name="Lapidus A."/>
            <person name="Rokhsar D.S."/>
            <person name="Lebrilla C.B."/>
            <person name="German J.B."/>
            <person name="Price N.P."/>
            <person name="Richardson P.M."/>
            <person name="Mills D.A."/>
        </authorList>
    </citation>
    <scope>NUCLEOTIDE SEQUENCE [LARGE SCALE GENOMIC DNA]</scope>
    <source>
        <strain>ATCC 15697 / DSM 20088 / JCM 1222 / NCTC 11817 / S12</strain>
    </source>
</reference>
<reference key="2">
    <citation type="journal article" date="2011" name="Nature">
        <title>Bifidobacteria can protect from enteropathogenic infection through production of acetate.</title>
        <authorList>
            <person name="Fukuda S."/>
            <person name="Toh H."/>
            <person name="Hase K."/>
            <person name="Oshima K."/>
            <person name="Nakanishi Y."/>
            <person name="Yoshimura K."/>
            <person name="Tobe T."/>
            <person name="Clarke J.M."/>
            <person name="Topping D.L."/>
            <person name="Suzuki T."/>
            <person name="Taylor T.D."/>
            <person name="Itoh K."/>
            <person name="Kikuchi J."/>
            <person name="Morita H."/>
            <person name="Hattori M."/>
            <person name="Ohno H."/>
        </authorList>
    </citation>
    <scope>NUCLEOTIDE SEQUENCE [LARGE SCALE GENOMIC DNA]</scope>
    <source>
        <strain>ATCC 15697 / DSM 20088 / JCM 1222 / NCTC 11817 / S12</strain>
    </source>
</reference>
<evidence type="ECO:0000255" key="1">
    <source>
        <dbReference type="HAMAP-Rule" id="MF_00480"/>
    </source>
</evidence>
<evidence type="ECO:0000305" key="2"/>
<protein>
    <recommendedName>
        <fullName evidence="1">Small ribosomal subunit protein uS7</fullName>
    </recommendedName>
    <alternativeName>
        <fullName evidence="2">30S ribosomal protein S7</fullName>
    </alternativeName>
</protein>
<comment type="function">
    <text evidence="1">One of the primary rRNA binding proteins, it binds directly to 16S rRNA where it nucleates assembly of the head domain of the 30S subunit. Is located at the subunit interface close to the decoding center, probably blocks exit of the E-site tRNA.</text>
</comment>
<comment type="subunit">
    <text evidence="1">Part of the 30S ribosomal subunit. Contacts proteins S9 and S11.</text>
</comment>
<comment type="similarity">
    <text evidence="1">Belongs to the universal ribosomal protein uS7 family.</text>
</comment>